<dbReference type="EC" id="3.1.21.2" evidence="1"/>
<dbReference type="EMBL" id="CP000792">
    <property type="protein sequence ID" value="ABW74720.1"/>
    <property type="molecule type" value="Genomic_DNA"/>
</dbReference>
<dbReference type="RefSeq" id="WP_048809710.1">
    <property type="nucleotide sequence ID" value="NC_009802.2"/>
</dbReference>
<dbReference type="SMR" id="A8Z6D9"/>
<dbReference type="STRING" id="360104.CCC13826_1104"/>
<dbReference type="KEGG" id="cco:CCC13826_1104"/>
<dbReference type="eggNOG" id="COG0648">
    <property type="taxonomic scope" value="Bacteria"/>
</dbReference>
<dbReference type="HOGENOM" id="CLU_025885_0_4_7"/>
<dbReference type="OrthoDB" id="9805666at2"/>
<dbReference type="Proteomes" id="UP000001121">
    <property type="component" value="Chromosome"/>
</dbReference>
<dbReference type="GO" id="GO:0008833">
    <property type="term" value="F:deoxyribonuclease IV (phage-T4-induced) activity"/>
    <property type="evidence" value="ECO:0007669"/>
    <property type="project" value="UniProtKB-UniRule"/>
</dbReference>
<dbReference type="GO" id="GO:0003677">
    <property type="term" value="F:DNA binding"/>
    <property type="evidence" value="ECO:0007669"/>
    <property type="project" value="InterPro"/>
</dbReference>
<dbReference type="GO" id="GO:0003906">
    <property type="term" value="F:DNA-(apurinic or apyrimidinic site) endonuclease activity"/>
    <property type="evidence" value="ECO:0007669"/>
    <property type="project" value="TreeGrafter"/>
</dbReference>
<dbReference type="GO" id="GO:0008081">
    <property type="term" value="F:phosphoric diester hydrolase activity"/>
    <property type="evidence" value="ECO:0007669"/>
    <property type="project" value="TreeGrafter"/>
</dbReference>
<dbReference type="GO" id="GO:0008270">
    <property type="term" value="F:zinc ion binding"/>
    <property type="evidence" value="ECO:0007669"/>
    <property type="project" value="UniProtKB-UniRule"/>
</dbReference>
<dbReference type="GO" id="GO:0006284">
    <property type="term" value="P:base-excision repair"/>
    <property type="evidence" value="ECO:0007669"/>
    <property type="project" value="TreeGrafter"/>
</dbReference>
<dbReference type="CDD" id="cd00019">
    <property type="entry name" value="AP2Ec"/>
    <property type="match status" value="1"/>
</dbReference>
<dbReference type="FunFam" id="3.20.20.150:FF:000001">
    <property type="entry name" value="Probable endonuclease 4"/>
    <property type="match status" value="1"/>
</dbReference>
<dbReference type="Gene3D" id="3.20.20.150">
    <property type="entry name" value="Divalent-metal-dependent TIM barrel enzymes"/>
    <property type="match status" value="1"/>
</dbReference>
<dbReference type="HAMAP" id="MF_00152">
    <property type="entry name" value="Nfo"/>
    <property type="match status" value="1"/>
</dbReference>
<dbReference type="InterPro" id="IPR001719">
    <property type="entry name" value="AP_endonuc_2"/>
</dbReference>
<dbReference type="InterPro" id="IPR018246">
    <property type="entry name" value="AP_endonuc_F2_Zn_BS"/>
</dbReference>
<dbReference type="InterPro" id="IPR036237">
    <property type="entry name" value="Xyl_isomerase-like_sf"/>
</dbReference>
<dbReference type="InterPro" id="IPR013022">
    <property type="entry name" value="Xyl_isomerase-like_TIM-brl"/>
</dbReference>
<dbReference type="NCBIfam" id="TIGR00587">
    <property type="entry name" value="nfo"/>
    <property type="match status" value="1"/>
</dbReference>
<dbReference type="NCBIfam" id="NF002199">
    <property type="entry name" value="PRK01060.1-4"/>
    <property type="match status" value="1"/>
</dbReference>
<dbReference type="PANTHER" id="PTHR21445:SF0">
    <property type="entry name" value="APURINIC-APYRIMIDINIC ENDONUCLEASE"/>
    <property type="match status" value="1"/>
</dbReference>
<dbReference type="PANTHER" id="PTHR21445">
    <property type="entry name" value="ENDONUCLEASE IV ENDODEOXYRIBONUCLEASE IV"/>
    <property type="match status" value="1"/>
</dbReference>
<dbReference type="Pfam" id="PF01261">
    <property type="entry name" value="AP_endonuc_2"/>
    <property type="match status" value="1"/>
</dbReference>
<dbReference type="SMART" id="SM00518">
    <property type="entry name" value="AP2Ec"/>
    <property type="match status" value="1"/>
</dbReference>
<dbReference type="SUPFAM" id="SSF51658">
    <property type="entry name" value="Xylose isomerase-like"/>
    <property type="match status" value="1"/>
</dbReference>
<dbReference type="PROSITE" id="PS00729">
    <property type="entry name" value="AP_NUCLEASE_F2_1"/>
    <property type="match status" value="1"/>
</dbReference>
<dbReference type="PROSITE" id="PS00730">
    <property type="entry name" value="AP_NUCLEASE_F2_2"/>
    <property type="match status" value="1"/>
</dbReference>
<dbReference type="PROSITE" id="PS00731">
    <property type="entry name" value="AP_NUCLEASE_F2_3"/>
    <property type="match status" value="1"/>
</dbReference>
<dbReference type="PROSITE" id="PS51432">
    <property type="entry name" value="AP_NUCLEASE_F2_4"/>
    <property type="match status" value="1"/>
</dbReference>
<organism>
    <name type="scientific">Campylobacter concisus (strain 13826)</name>
    <dbReference type="NCBI Taxonomy" id="360104"/>
    <lineage>
        <taxon>Bacteria</taxon>
        <taxon>Pseudomonadati</taxon>
        <taxon>Campylobacterota</taxon>
        <taxon>Epsilonproteobacteria</taxon>
        <taxon>Campylobacterales</taxon>
        <taxon>Campylobacteraceae</taxon>
        <taxon>Campylobacter</taxon>
    </lineage>
</organism>
<sequence>MRYIGAHVSAAGGVSNAPINAAKIGANAFALFTKNQRQWSAKELSEGEIEQFKANLKASGISADHVLPHASYLINLGHPEKEARAKSLEAFIDEIERASKLGLKLLNFHPGSHLKQISQNECLDNIARCINEALKRTSGVKLVIENTAAQGSNLGFDFAQLAYLIERVDDESRVGVCIDTCHAFAAGYDLRSKEAYAKTMGEFDAVIGYKFLSGMHLNDAKFGLGSKKDRHESLGKGELGLGAFENIINDDKIGEIPLILETIDESIWEDEIKILRNLEKEKL</sequence>
<evidence type="ECO:0000255" key="1">
    <source>
        <dbReference type="HAMAP-Rule" id="MF_00152"/>
    </source>
</evidence>
<protein>
    <recommendedName>
        <fullName evidence="1">Probable endonuclease 4</fullName>
        <ecNumber evidence="1">3.1.21.2</ecNumber>
    </recommendedName>
    <alternativeName>
        <fullName evidence="1">Endodeoxyribonuclease IV</fullName>
    </alternativeName>
    <alternativeName>
        <fullName evidence="1">Endonuclease IV</fullName>
    </alternativeName>
</protein>
<feature type="chain" id="PRO_1000071526" description="Probable endonuclease 4">
    <location>
        <begin position="1"/>
        <end position="283"/>
    </location>
</feature>
<feature type="binding site" evidence="1">
    <location>
        <position position="69"/>
    </location>
    <ligand>
        <name>Zn(2+)</name>
        <dbReference type="ChEBI" id="CHEBI:29105"/>
        <label>1</label>
    </ligand>
</feature>
<feature type="binding site" evidence="1">
    <location>
        <position position="109"/>
    </location>
    <ligand>
        <name>Zn(2+)</name>
        <dbReference type="ChEBI" id="CHEBI:29105"/>
        <label>1</label>
    </ligand>
</feature>
<feature type="binding site" evidence="1">
    <location>
        <position position="145"/>
    </location>
    <ligand>
        <name>Zn(2+)</name>
        <dbReference type="ChEBI" id="CHEBI:29105"/>
        <label>1</label>
    </ligand>
</feature>
<feature type="binding site" evidence="1">
    <location>
        <position position="145"/>
    </location>
    <ligand>
        <name>Zn(2+)</name>
        <dbReference type="ChEBI" id="CHEBI:29105"/>
        <label>2</label>
    </ligand>
</feature>
<feature type="binding site" evidence="1">
    <location>
        <position position="179"/>
    </location>
    <ligand>
        <name>Zn(2+)</name>
        <dbReference type="ChEBI" id="CHEBI:29105"/>
        <label>2</label>
    </ligand>
</feature>
<feature type="binding site" evidence="1">
    <location>
        <position position="182"/>
    </location>
    <ligand>
        <name>Zn(2+)</name>
        <dbReference type="ChEBI" id="CHEBI:29105"/>
        <label>3</label>
    </ligand>
</feature>
<feature type="binding site" evidence="1">
    <location>
        <position position="216"/>
    </location>
    <ligand>
        <name>Zn(2+)</name>
        <dbReference type="ChEBI" id="CHEBI:29105"/>
        <label>2</label>
    </ligand>
</feature>
<feature type="binding site" evidence="1">
    <location>
        <position position="229"/>
    </location>
    <ligand>
        <name>Zn(2+)</name>
        <dbReference type="ChEBI" id="CHEBI:29105"/>
        <label>3</label>
    </ligand>
</feature>
<feature type="binding site" evidence="1">
    <location>
        <position position="231"/>
    </location>
    <ligand>
        <name>Zn(2+)</name>
        <dbReference type="ChEBI" id="CHEBI:29105"/>
        <label>3</label>
    </ligand>
</feature>
<feature type="binding site" evidence="1">
    <location>
        <position position="261"/>
    </location>
    <ligand>
        <name>Zn(2+)</name>
        <dbReference type="ChEBI" id="CHEBI:29105"/>
        <label>2</label>
    </ligand>
</feature>
<reference key="1">
    <citation type="submission" date="2007-10" db="EMBL/GenBank/DDBJ databases">
        <title>Genome sequence of Campylobacter concisus 13826 isolated from human feces.</title>
        <authorList>
            <person name="Fouts D.E."/>
            <person name="Mongodin E.F."/>
            <person name="Puiu D."/>
            <person name="Sebastian Y."/>
            <person name="Miller W.G."/>
            <person name="Mandrell R.E."/>
            <person name="On S."/>
            <person name="Nelson K.E."/>
        </authorList>
    </citation>
    <scope>NUCLEOTIDE SEQUENCE [LARGE SCALE GENOMIC DNA]</scope>
    <source>
        <strain>13826</strain>
    </source>
</reference>
<keyword id="KW-0227">DNA damage</keyword>
<keyword id="KW-0234">DNA repair</keyword>
<keyword id="KW-0255">Endonuclease</keyword>
<keyword id="KW-0378">Hydrolase</keyword>
<keyword id="KW-0479">Metal-binding</keyword>
<keyword id="KW-0540">Nuclease</keyword>
<keyword id="KW-0862">Zinc</keyword>
<gene>
    <name evidence="1" type="primary">nfo</name>
    <name type="ordered locus">Ccon26_00800</name>
    <name type="ORF">CCC13826_1104</name>
</gene>
<accession>A8Z6D9</accession>
<proteinExistence type="inferred from homology"/>
<name>END4_CAMC1</name>
<comment type="function">
    <text evidence="1">Endonuclease IV plays a role in DNA repair. It cleaves phosphodiester bonds at apurinic or apyrimidinic (AP) sites, generating a 3'-hydroxyl group and a 5'-terminal sugar phosphate.</text>
</comment>
<comment type="catalytic activity">
    <reaction evidence="1">
        <text>Endonucleolytic cleavage to 5'-phosphooligonucleotide end-products.</text>
        <dbReference type="EC" id="3.1.21.2"/>
    </reaction>
</comment>
<comment type="cofactor">
    <cofactor evidence="1">
        <name>Zn(2+)</name>
        <dbReference type="ChEBI" id="CHEBI:29105"/>
    </cofactor>
    <text evidence="1">Binds 3 Zn(2+) ions.</text>
</comment>
<comment type="similarity">
    <text evidence="1">Belongs to the AP endonuclease 2 family.</text>
</comment>